<reference evidence="13" key="1">
    <citation type="journal article" date="1996" name="Mol. Biol. Cell">
        <title>ADM-1, a protein with metalloprotease- and disintegrin-like domains, is expressed in syncytial organs, sperm, and sheath cells of sensory organs in Caenorhabditis elegans.</title>
        <authorList>
            <person name="Podbilewicz B."/>
        </authorList>
    </citation>
    <scope>NUCLEOTIDE SEQUENCE [MRNA]</scope>
    <scope>SUBCELLULAR LOCATION</scope>
    <scope>DEVELOPMENTAL STAGE</scope>
    <source>
        <strain evidence="13">Bristol N2</strain>
    </source>
</reference>
<reference evidence="14" key="2">
    <citation type="journal article" date="1998" name="Science">
        <title>Genome sequence of the nematode C. elegans: a platform for investigating biology.</title>
        <authorList>
            <consortium name="The C. elegans sequencing consortium"/>
        </authorList>
    </citation>
    <scope>NUCLEOTIDE SEQUENCE [LARGE SCALE GENOMIC DNA]</scope>
    <source>
        <strain evidence="14">Bristol N2</strain>
    </source>
</reference>
<reference evidence="11" key="3">
    <citation type="journal article" date="1997" name="Dev. Biol.">
        <title>Genetic enhancers of sem-5 define components of the gonad-independent guidance mechanism controlling sex myoblast migration in Caenorhabditis elegans hermaphrodites.</title>
        <authorList>
            <person name="Chen E.B."/>
            <person name="Branda C.S."/>
            <person name="Stern M.J."/>
        </authorList>
    </citation>
    <scope>FUNCTION</scope>
    <scope>DISRUPTION PHENOTYPE</scope>
</reference>
<reference evidence="11" key="4">
    <citation type="journal article" date="2003" name="Development">
        <title>UNC-71, a disintegrin and metalloprotease (ADAM) protein, regulates motor axon guidance and sex myoblast migration in C. elegans.</title>
        <authorList>
            <person name="Huang X."/>
            <person name="Huang P."/>
            <person name="Robinson M.K."/>
            <person name="Stern M.J."/>
            <person name="Jin Y."/>
        </authorList>
    </citation>
    <scope>FUNCTION</scope>
    <scope>SUBCELLULAR LOCATION</scope>
    <scope>DEVELOPMENTAL STAGE</scope>
    <scope>DISRUPTION PHENOTYPE</scope>
    <scope>MUTAGENESIS OF GLY-149; ASP-461; LEU-471; CYS-477; ASP-504; CYS-509; ALA-557; GLY-594; SER-628; CYS-687; PRO-902 AND ARG-990</scope>
</reference>
<reference evidence="11" key="5">
    <citation type="journal article" date="2012" name="FEBS Lett.">
        <title>MIG-13 controls anteroposterior cell migration by interacting with UNC-71/ADM-1 and SRC-1 in Caenorhabditis elegans.</title>
        <authorList>
            <person name="Masuda H."/>
            <person name="Nakamura K."/>
            <person name="Takata N."/>
            <person name="Itoh B."/>
            <person name="Hirose T."/>
            <person name="Moribe H."/>
            <person name="Mekada E."/>
            <person name="Okada M."/>
        </authorList>
    </citation>
    <scope>FUNCTION</scope>
    <scope>DEVELOPMENTAL STAGE</scope>
</reference>
<accession>G5EFD5</accession>
<protein>
    <recommendedName>
        <fullName evidence="11">Disintegrin and metalloproteinase domain-containing protein unc-71</fullName>
    </recommendedName>
    <alternativeName>
        <fullName evidence="15">Uncoordinated protein 71</fullName>
    </alternativeName>
</protein>
<proteinExistence type="evidence at protein level"/>
<gene>
    <name evidence="15" type="primary">unc-71</name>
    <name evidence="15" type="synonym">adm-1</name>
    <name evidence="15" type="ORF">Y37D8A.13</name>
</gene>
<organism evidence="14">
    <name type="scientific">Caenorhabditis elegans</name>
    <dbReference type="NCBI Taxonomy" id="6239"/>
    <lineage>
        <taxon>Eukaryota</taxon>
        <taxon>Metazoa</taxon>
        <taxon>Ecdysozoa</taxon>
        <taxon>Nematoda</taxon>
        <taxon>Chromadorea</taxon>
        <taxon>Rhabditida</taxon>
        <taxon>Rhabditina</taxon>
        <taxon>Rhabditomorpha</taxon>
        <taxon>Rhabditoidea</taxon>
        <taxon>Rhabditidae</taxon>
        <taxon>Peloderinae</taxon>
        <taxon>Caenorhabditis</taxon>
    </lineage>
</organism>
<name>UNC71_CAEEL</name>
<feature type="signal peptide" evidence="1">
    <location>
        <begin position="1"/>
        <end position="23"/>
    </location>
</feature>
<feature type="chain" id="PRO_5008958430" description="Disintegrin and metalloproteinase domain-containing protein unc-71" evidence="11">
    <location>
        <begin position="24"/>
        <end position="1042"/>
    </location>
</feature>
<feature type="topological domain" description="Extracellular" evidence="11">
    <location>
        <begin position="24"/>
        <end position="746"/>
    </location>
</feature>
<feature type="transmembrane region" description="Helical" evidence="1">
    <location>
        <begin position="747"/>
        <end position="767"/>
    </location>
</feature>
<feature type="topological domain" description="Cytoplasmic" evidence="11">
    <location>
        <begin position="768"/>
        <end position="1042"/>
    </location>
</feature>
<feature type="domain" description="Peptidase M12B" evidence="4">
    <location>
        <begin position="227"/>
        <end position="431"/>
    </location>
</feature>
<feature type="domain" description="Disintegrin" evidence="2">
    <location>
        <begin position="437"/>
        <end position="524"/>
    </location>
</feature>
<feature type="domain" description="EGF-like" evidence="3">
    <location>
        <begin position="662"/>
        <end position="699"/>
    </location>
</feature>
<feature type="region of interest" description="Disordered" evidence="6">
    <location>
        <begin position="779"/>
        <end position="809"/>
    </location>
</feature>
<feature type="region of interest" description="Disordered" evidence="6">
    <location>
        <begin position="825"/>
        <end position="850"/>
    </location>
</feature>
<feature type="region of interest" description="Disordered" evidence="6">
    <location>
        <begin position="980"/>
        <end position="1028"/>
    </location>
</feature>
<feature type="compositionally biased region" description="Basic and acidic residues" evidence="6">
    <location>
        <begin position="825"/>
        <end position="836"/>
    </location>
</feature>
<feature type="compositionally biased region" description="Polar residues" evidence="6">
    <location>
        <begin position="1002"/>
        <end position="1027"/>
    </location>
</feature>
<feature type="glycosylation site" description="N-linked (GlcNAc...) asparagine" evidence="5">
    <location>
        <position position="103"/>
    </location>
</feature>
<feature type="glycosylation site" description="N-linked (GlcNAc...) asparagine" evidence="5">
    <location>
        <position position="155"/>
    </location>
</feature>
<feature type="glycosylation site" description="N-linked (GlcNAc...) asparagine" evidence="5">
    <location>
        <position position="538"/>
    </location>
</feature>
<feature type="glycosylation site" description="N-linked (GlcNAc...) asparagine" evidence="5">
    <location>
        <position position="703"/>
    </location>
</feature>
<feature type="disulfide bond" evidence="4">
    <location>
        <begin position="338"/>
        <end position="426"/>
    </location>
</feature>
<feature type="disulfide bond" evidence="4">
    <location>
        <begin position="378"/>
        <end position="410"/>
    </location>
</feature>
<feature type="disulfide bond" evidence="4">
    <location>
        <begin position="380"/>
        <end position="386"/>
    </location>
</feature>
<feature type="disulfide bond" evidence="2">
    <location>
        <begin position="496"/>
        <end position="516"/>
    </location>
</feature>
<feature type="disulfide bond" evidence="3">
    <location>
        <begin position="666"/>
        <end position="681"/>
    </location>
</feature>
<feature type="disulfide bond" evidence="3">
    <location>
        <begin position="675"/>
        <end position="687"/>
    </location>
</feature>
<feature type="disulfide bond" evidence="3">
    <location>
        <begin position="689"/>
        <end position="698"/>
    </location>
</feature>
<feature type="mutagenesis site" description="In ju161; axon guidance defects." evidence="7">
    <original>G</original>
    <variation>R</variation>
    <location>
        <position position="149"/>
    </location>
</feature>
<feature type="mutagenesis site" description="In ay64; sex myoblast migration defects." evidence="7">
    <original>D</original>
    <variation>N</variation>
    <location>
        <position position="461"/>
    </location>
</feature>
<feature type="mutagenesis site" description="In ay46; sex myoblast migration defects." evidence="7">
    <original>L</original>
    <variation>P</variation>
    <location>
        <position position="471"/>
    </location>
</feature>
<feature type="mutagenesis site" description="In ay17; sex myoblast migration defects." evidence="7">
    <original>C</original>
    <variation>Y</variation>
    <location>
        <position position="477"/>
    </location>
</feature>
<feature type="mutagenesis site" description="In ju160; axon guidance defects." evidence="7">
    <original>D</original>
    <variation>N</variation>
    <location>
        <position position="504"/>
    </location>
</feature>
<feature type="mutagenesis site" description="In ju159; axon guidance defects." evidence="7">
    <original>C</original>
    <variation>Y</variation>
    <location>
        <position position="509"/>
    </location>
</feature>
<feature type="mutagenesis site" description="In e541; uncoordinated movement." evidence="7">
    <original>A</original>
    <variation>T</variation>
    <location>
        <position position="557"/>
    </location>
</feature>
<feature type="mutagenesis site" description="In ju157; axon guidance defects." evidence="7">
    <original>G</original>
    <variation>E</variation>
    <location>
        <position position="594"/>
    </location>
</feature>
<feature type="mutagenesis site" description="In ay47; sex myoblast migration defects." evidence="7">
    <original>S</original>
    <variation>L</variation>
    <location>
        <position position="628"/>
    </location>
</feature>
<feature type="mutagenesis site" description="In ay44; sex myoblast migration defects." evidence="7">
    <original>C</original>
    <variation>S</variation>
    <location>
        <position position="687"/>
    </location>
</feature>
<feature type="mutagenesis site" description="In ay48; sex myoblast migration defects." evidence="7">
    <original>P</original>
    <variation>L</variation>
    <location>
        <position position="902"/>
    </location>
</feature>
<feature type="mutagenesis site" description="In ju255; axon guidance defects." evidence="7">
    <original>R</original>
    <variation>K</variation>
    <location>
        <position position="990"/>
    </location>
</feature>
<dbReference type="EMBL" id="U68185">
    <property type="protein sequence ID" value="AAC47444.1"/>
    <property type="molecule type" value="mRNA"/>
</dbReference>
<dbReference type="EMBL" id="BX284603">
    <property type="protein sequence ID" value="CAA21545.1"/>
    <property type="molecule type" value="Genomic_DNA"/>
</dbReference>
<dbReference type="PIR" id="T26644">
    <property type="entry name" value="T26644"/>
</dbReference>
<dbReference type="RefSeq" id="NP_499680.1">
    <property type="nucleotide sequence ID" value="NM_067279.8"/>
</dbReference>
<dbReference type="SMR" id="G5EFD5"/>
<dbReference type="FunCoup" id="G5EFD5">
    <property type="interactions" value="51"/>
</dbReference>
<dbReference type="STRING" id="6239.Y37D8A.13.1"/>
<dbReference type="GlyCosmos" id="G5EFD5">
    <property type="glycosylation" value="4 sites, No reported glycans"/>
</dbReference>
<dbReference type="PaxDb" id="6239-Y37D8A.13"/>
<dbReference type="PeptideAtlas" id="G5EFD5"/>
<dbReference type="EnsemblMetazoa" id="Y37D8A.13.1">
    <property type="protein sequence ID" value="Y37D8A.13.1"/>
    <property type="gene ID" value="WBGene00006804"/>
</dbReference>
<dbReference type="GeneID" id="176706"/>
<dbReference type="KEGG" id="cel:CELE_Y37D8A.13"/>
<dbReference type="AGR" id="WB:WBGene00006804"/>
<dbReference type="CTD" id="176706"/>
<dbReference type="WormBase" id="Y37D8A.13">
    <property type="protein sequence ID" value="CE20217"/>
    <property type="gene ID" value="WBGene00006804"/>
    <property type="gene designation" value="unc-71"/>
</dbReference>
<dbReference type="eggNOG" id="KOG3607">
    <property type="taxonomic scope" value="Eukaryota"/>
</dbReference>
<dbReference type="GeneTree" id="ENSGT00940000167333"/>
<dbReference type="HOGENOM" id="CLU_291906_0_0_1"/>
<dbReference type="InParanoid" id="G5EFD5"/>
<dbReference type="OMA" id="VNNRMTP"/>
<dbReference type="OrthoDB" id="5951731at2759"/>
<dbReference type="PhylomeDB" id="G5EFD5"/>
<dbReference type="Reactome" id="R-CEL-1474228">
    <property type="pathway name" value="Degradation of the extracellular matrix"/>
</dbReference>
<dbReference type="Reactome" id="R-CEL-6798695">
    <property type="pathway name" value="Neutrophil degranulation"/>
</dbReference>
<dbReference type="PRO" id="PR:G5EFD5"/>
<dbReference type="Proteomes" id="UP000001940">
    <property type="component" value="Chromosome III"/>
</dbReference>
<dbReference type="Bgee" id="WBGene00006804">
    <property type="expression patterns" value="Expressed in embryo and 10 other cell types or tissues"/>
</dbReference>
<dbReference type="GO" id="GO:0016020">
    <property type="term" value="C:membrane"/>
    <property type="evidence" value="ECO:0000314"/>
    <property type="project" value="WormBase"/>
</dbReference>
<dbReference type="GO" id="GO:0005886">
    <property type="term" value="C:plasma membrane"/>
    <property type="evidence" value="ECO:0007669"/>
    <property type="project" value="UniProtKB-SubCell"/>
</dbReference>
<dbReference type="GO" id="GO:0004222">
    <property type="term" value="F:metalloendopeptidase activity"/>
    <property type="evidence" value="ECO:0000318"/>
    <property type="project" value="GO_Central"/>
</dbReference>
<dbReference type="GO" id="GO:0008237">
    <property type="term" value="F:metallopeptidase activity"/>
    <property type="evidence" value="ECO:0000250"/>
    <property type="project" value="WormBase"/>
</dbReference>
<dbReference type="GO" id="GO:0098609">
    <property type="term" value="P:cell-cell adhesion"/>
    <property type="evidence" value="ECO:0000304"/>
    <property type="project" value="WormBase"/>
</dbReference>
<dbReference type="GO" id="GO:0006509">
    <property type="term" value="P:membrane protein ectodomain proteolysis"/>
    <property type="evidence" value="ECO:0000318"/>
    <property type="project" value="GO_Central"/>
</dbReference>
<dbReference type="GO" id="GO:0045026">
    <property type="term" value="P:plasma membrane fusion"/>
    <property type="evidence" value="ECO:0000304"/>
    <property type="project" value="WormBase"/>
</dbReference>
<dbReference type="GO" id="GO:0006508">
    <property type="term" value="P:proteolysis"/>
    <property type="evidence" value="ECO:0000250"/>
    <property type="project" value="WormBase"/>
</dbReference>
<dbReference type="CDD" id="cd04269">
    <property type="entry name" value="ZnMc_adamalysin_II_like"/>
    <property type="match status" value="1"/>
</dbReference>
<dbReference type="FunFam" id="4.10.70.10:FF:000001">
    <property type="entry name" value="Disintegrin and metalloproteinase domain-containing protein 22"/>
    <property type="match status" value="1"/>
</dbReference>
<dbReference type="Gene3D" id="3.40.390.10">
    <property type="entry name" value="Collagenase (Catalytic Domain)"/>
    <property type="match status" value="1"/>
</dbReference>
<dbReference type="Gene3D" id="4.10.70.10">
    <property type="entry name" value="Disintegrin domain"/>
    <property type="match status" value="1"/>
</dbReference>
<dbReference type="Gene3D" id="2.10.25.10">
    <property type="entry name" value="Laminin"/>
    <property type="match status" value="1"/>
</dbReference>
<dbReference type="InterPro" id="IPR006586">
    <property type="entry name" value="ADAM_Cys-rich"/>
</dbReference>
<dbReference type="InterPro" id="IPR001762">
    <property type="entry name" value="Disintegrin_dom"/>
</dbReference>
<dbReference type="InterPro" id="IPR036436">
    <property type="entry name" value="Disintegrin_dom_sf"/>
</dbReference>
<dbReference type="InterPro" id="IPR000742">
    <property type="entry name" value="EGF-like_dom"/>
</dbReference>
<dbReference type="InterPro" id="IPR024079">
    <property type="entry name" value="MetalloPept_cat_dom_sf"/>
</dbReference>
<dbReference type="InterPro" id="IPR001590">
    <property type="entry name" value="Peptidase_M12B"/>
</dbReference>
<dbReference type="InterPro" id="IPR034027">
    <property type="entry name" value="Reprolysin_adamalysin"/>
</dbReference>
<dbReference type="PANTHER" id="PTHR11905">
    <property type="entry name" value="ADAM A DISINTEGRIN AND METALLOPROTEASE DOMAIN"/>
    <property type="match status" value="1"/>
</dbReference>
<dbReference type="PANTHER" id="PTHR11905:SF248">
    <property type="entry name" value="DISINTEGRIN AND METALLOPROTEINASE DOMAIN-CONTAINING PROTEIN UNC-71"/>
    <property type="match status" value="1"/>
</dbReference>
<dbReference type="Pfam" id="PF08516">
    <property type="entry name" value="ADAM_CR"/>
    <property type="match status" value="1"/>
</dbReference>
<dbReference type="Pfam" id="PF00200">
    <property type="entry name" value="Disintegrin"/>
    <property type="match status" value="1"/>
</dbReference>
<dbReference type="Pfam" id="PF23106">
    <property type="entry name" value="EGF_Teneurin"/>
    <property type="match status" value="1"/>
</dbReference>
<dbReference type="Pfam" id="PF01421">
    <property type="entry name" value="Reprolysin"/>
    <property type="match status" value="1"/>
</dbReference>
<dbReference type="SMART" id="SM00608">
    <property type="entry name" value="ACR"/>
    <property type="match status" value="1"/>
</dbReference>
<dbReference type="SMART" id="SM00050">
    <property type="entry name" value="DISIN"/>
    <property type="match status" value="1"/>
</dbReference>
<dbReference type="SUPFAM" id="SSF57552">
    <property type="entry name" value="Blood coagulation inhibitor (disintegrin)"/>
    <property type="match status" value="1"/>
</dbReference>
<dbReference type="SUPFAM" id="SSF55486">
    <property type="entry name" value="Metalloproteases ('zincins'), catalytic domain"/>
    <property type="match status" value="1"/>
</dbReference>
<dbReference type="PROSITE" id="PS50215">
    <property type="entry name" value="ADAM_MEPRO"/>
    <property type="match status" value="1"/>
</dbReference>
<dbReference type="PROSITE" id="PS50214">
    <property type="entry name" value="DISINTEGRIN_2"/>
    <property type="match status" value="1"/>
</dbReference>
<dbReference type="PROSITE" id="PS00022">
    <property type="entry name" value="EGF_1"/>
    <property type="match status" value="1"/>
</dbReference>
<dbReference type="PROSITE" id="PS01186">
    <property type="entry name" value="EGF_2"/>
    <property type="match status" value="1"/>
</dbReference>
<sequence>MICASKITMLGLLVMCTLGGVLGKVDIRQTTANKAFMETMRADGYEVVHPFQIRDKNERIGIDTRNYFLKAQEHYSHVTIVIRSNQLGRLKLVLERNNFIFLNQTAFHKLDADGERVIQNRVENCYYQGTVGGEESSFVALSSCNGLRGVISFANGTTFGIWPLDGGDRNSRRHPHILYKSEWSQEAKCGSSMAHAVGQRRMKKHVHKHRSHHHEHNKKRDVSKRTKYVEVALIADYEFMKARGLHDLDAISYMLESLNIADSMLSRDLNIRLSAVYVELWTDVQRIDLWEDIERTLSGVVDYASGHIYHIQKDASILFTAGSFANQEVSNAAIRSICTARSAVIVKGVEQFATHWNGELLAQSIGHLLGLEHDTTACSCEPSPECVMRQQPGRVGGGGGSPFSWQFSKCSVARMHGIWQDGNIQCLLNKPFQVSELRECGNGVVDGSEECDCGSRENCQDPCCDPLTCTLRPHAQCAAHHKCCHRCELRKAGDTCRSSKSPCDVAEQCDGKSGDCPPDGHLIDGTVCGTDGQCWRGNCSDSHQQCQKLWGREARVAEPVCFEQNTKGAEYANCGQRQADGTYHPCQIEDTRCGTLHCHSGSITPIDSSLKAFTFHFTENSHQIQCKSIASAAVGLTSDGTNCASGRVCVAGSCVEMSSVSSATACPTNNLALLCSGHGHCTTTARCVCFNGWSGVACDIRSNSSTYQGSMGFGEEGSGGSSQKSSERKTIMIPHLNIGTTLETATLFAILLGFGVFLLLCLVCLMLCYRRRSVVEIPKPSDEKDEESPDRQIKFGNMPSYREEKRKRKSNKKIYGALNRITEADERDSTSLRSRDSAGGSQQLVDRRNGAPVVVGGIRDPYAGEHIYAESSSNHLTRQFRGINSDGSYPLRSFGSWRSSAPISPASSSGQLTDVSTATTPLRLNKIGKFLKTLQSDDESPSPFSDHQSFTTGIGIGARLEQMQFGGGGDEELSAVEADHDVGSNTESSRGCEEPMDPGSWDSPTLVNGASSSSTSNNYNFRQSPSLFSDPFKLEMTNSMHN</sequence>
<evidence type="ECO:0000255" key="1"/>
<evidence type="ECO:0000255" key="2">
    <source>
        <dbReference type="PROSITE-ProRule" id="PRU00068"/>
    </source>
</evidence>
<evidence type="ECO:0000255" key="3">
    <source>
        <dbReference type="PROSITE-ProRule" id="PRU00076"/>
    </source>
</evidence>
<evidence type="ECO:0000255" key="4">
    <source>
        <dbReference type="PROSITE-ProRule" id="PRU00276"/>
    </source>
</evidence>
<evidence type="ECO:0000255" key="5">
    <source>
        <dbReference type="PROSITE-ProRule" id="PRU00498"/>
    </source>
</evidence>
<evidence type="ECO:0000256" key="6">
    <source>
        <dbReference type="SAM" id="MobiDB-lite"/>
    </source>
</evidence>
<evidence type="ECO:0000269" key="7">
    <source>
    </source>
</evidence>
<evidence type="ECO:0000269" key="8">
    <source>
    </source>
</evidence>
<evidence type="ECO:0000269" key="9">
    <source>
    </source>
</evidence>
<evidence type="ECO:0000269" key="10">
    <source>
    </source>
</evidence>
<evidence type="ECO:0000305" key="11"/>
<evidence type="ECO:0000305" key="12">
    <source>
    </source>
</evidence>
<evidence type="ECO:0000312" key="13">
    <source>
        <dbReference type="EMBL" id="AAC47444.1"/>
    </source>
</evidence>
<evidence type="ECO:0000312" key="14">
    <source>
        <dbReference type="Proteomes" id="UP000001940"/>
    </source>
</evidence>
<evidence type="ECO:0000312" key="15">
    <source>
        <dbReference type="WormBase" id="Y37D8A.13"/>
    </source>
</evidence>
<comment type="function">
    <text evidence="7 8 10">Involved in the migration of sex myoblasts (progenitors of egg-laying muscles), Q neuroblasts and BDU interneurons during development (PubMed:12783787, PubMed:22293500, PubMed:9073451). Involved in axon branching and guidance of neurons including GABAergic type D motor neurons (PubMed:12783787). Promotes sex myoblast migration and positioning independently of gonad attraction cues (PubMed:12783787, PubMed:9073451). May act downstream of mig-13 in order to promote the guidance, migration and positioning of Q neuroblasts and their descendants along the anteroposterior body axis (PubMed:22293500). Required for coordinated movements (PubMed:12783787).</text>
</comment>
<comment type="subcellular location">
    <subcellularLocation>
        <location evidence="7 12">Cell membrane</location>
        <topology evidence="1">Single-pass type I membrane protein</topology>
    </subcellularLocation>
</comment>
<comment type="developmental stage">
    <text evidence="7 8 9">Expressed throughout development (PubMed:12783787, PubMed:22293500, PubMed:8970152). First expressed in several posterior cells of comma stage embryos (PubMed:12783787). Expressed in the excretory cell and in some head neurons in threefold stage embryos (PubMed:12783787). At the L1 stage of larval development expressed in the syncytial hypodermis (PubMed:8970152). From the L1 stage of larval development to adulthood, expressed in head neurons, the excretory cell, excretory gland cells and in the sphincter muscle (PubMed:12783787, PubMed:22293500). From the L4 stage of larval development to adulthood, expressed in hypodermal cells surrounding the vulva (PubMed:12783787).</text>
</comment>
<comment type="disruption phenotype">
    <text evidence="7 10">Defective sex myoblast migration (PubMed:9073451). Motor neuron axon guidance defects with aberrant axon branching in type D motor neurons (PubMed:12783787).</text>
</comment>
<comment type="caution">
    <text evidence="11">Contains a metallopeptidase domain, but the active site is not conserved, so the protein is not expected to have protease activity.</text>
</comment>
<keyword id="KW-1003">Cell membrane</keyword>
<keyword id="KW-1015">Disulfide bond</keyword>
<keyword id="KW-0245">EGF-like domain</keyword>
<keyword id="KW-0325">Glycoprotein</keyword>
<keyword id="KW-0472">Membrane</keyword>
<keyword id="KW-1185">Reference proteome</keyword>
<keyword id="KW-0732">Signal</keyword>
<keyword id="KW-0812">Transmembrane</keyword>
<keyword id="KW-1133">Transmembrane helix</keyword>